<sequence length="487" mass="52218">MKAQPKASHFIGGAFVEDKTGKPSPVIYPATGEEIARLYSATPDVIEAAYAAALKAQGEWAALKPVERGRILRRTADILREKNKKLSKLETLDTGKALQETLVADAASAADALEFFGGIISGFNGEFVELGGSFAYTRREALGICVGIGAWNYPIQIAAWKSAPALAMGNAFIFKPSENTPLSALALAEAYKEAGLPDGLFNVVQGFGDVGAALVNHRLTAKVSLTGSVPTGKRIMAQAGEHLKHVTMELGGKSPIIVFDDADIESAIGGAMLGNFYSTGQVCSNGTRVFVHKNLRERFVERLVERTRKIRIGDPLDEATQMGPLVNRAQRDKVLSYIEKGKAEGATLACGGGVPKLQGFDKGYFIEPTIFTDVTDDMTIAREEIFGPVMSVLEFSDEDEVIARANDTEFGLAAGVFTADIARGHRVIGQIKAGTCWINAYNLTPVEVPFGGYKQSGIGRENGIAALAHYSQIKTVYVEMGKVDSPY</sequence>
<evidence type="ECO:0000255" key="1">
    <source>
        <dbReference type="HAMAP-Rule" id="MF_00804"/>
    </source>
</evidence>
<name>BETB_BRUA4</name>
<comment type="function">
    <text evidence="1">Involved in the biosynthesis of the osmoprotectant glycine betaine. Catalyzes the irreversible oxidation of betaine aldehyde to the corresponding acid.</text>
</comment>
<comment type="catalytic activity">
    <reaction evidence="1">
        <text>betaine aldehyde + NAD(+) + H2O = glycine betaine + NADH + 2 H(+)</text>
        <dbReference type="Rhea" id="RHEA:15305"/>
        <dbReference type="ChEBI" id="CHEBI:15377"/>
        <dbReference type="ChEBI" id="CHEBI:15378"/>
        <dbReference type="ChEBI" id="CHEBI:15710"/>
        <dbReference type="ChEBI" id="CHEBI:17750"/>
        <dbReference type="ChEBI" id="CHEBI:57540"/>
        <dbReference type="ChEBI" id="CHEBI:57945"/>
        <dbReference type="EC" id="1.2.1.8"/>
    </reaction>
    <physiologicalReaction direction="left-to-right" evidence="1">
        <dbReference type="Rhea" id="RHEA:15306"/>
    </physiologicalReaction>
</comment>
<comment type="cofactor">
    <cofactor evidence="1">
        <name>K(+)</name>
        <dbReference type="ChEBI" id="CHEBI:29103"/>
    </cofactor>
    <text evidence="1">Binds 2 potassium ions per subunit.</text>
</comment>
<comment type="pathway">
    <text evidence="1">Amine and polyamine biosynthesis; betaine biosynthesis via choline pathway; betaine from betaine aldehyde: step 1/1.</text>
</comment>
<comment type="subunit">
    <text evidence="1">Dimer of dimers.</text>
</comment>
<comment type="similarity">
    <text evidence="1">Belongs to the aldehyde dehydrogenase family.</text>
</comment>
<dbReference type="EC" id="1.2.1.8" evidence="1"/>
<dbReference type="EMBL" id="CP000758">
    <property type="protein sequence ID" value="ABS15422.1"/>
    <property type="molecule type" value="Genomic_DNA"/>
</dbReference>
<dbReference type="RefSeq" id="WP_012092478.1">
    <property type="nucleotide sequence ID" value="NC_009667.1"/>
</dbReference>
<dbReference type="SMR" id="A6X2G8"/>
<dbReference type="STRING" id="439375.Oant_2710"/>
<dbReference type="KEGG" id="oan:Oant_2710"/>
<dbReference type="PATRIC" id="fig|439375.7.peg.2858"/>
<dbReference type="eggNOG" id="COG1012">
    <property type="taxonomic scope" value="Bacteria"/>
</dbReference>
<dbReference type="HOGENOM" id="CLU_005391_0_1_5"/>
<dbReference type="PhylomeDB" id="A6X2G8"/>
<dbReference type="UniPathway" id="UPA00529">
    <property type="reaction ID" value="UER00386"/>
</dbReference>
<dbReference type="Proteomes" id="UP000002301">
    <property type="component" value="Chromosome 1"/>
</dbReference>
<dbReference type="GO" id="GO:0008802">
    <property type="term" value="F:betaine-aldehyde dehydrogenase (NAD+) activity"/>
    <property type="evidence" value="ECO:0007669"/>
    <property type="project" value="UniProtKB-UniRule"/>
</dbReference>
<dbReference type="GO" id="GO:0046872">
    <property type="term" value="F:metal ion binding"/>
    <property type="evidence" value="ECO:0007669"/>
    <property type="project" value="UniProtKB-KW"/>
</dbReference>
<dbReference type="GO" id="GO:0019285">
    <property type="term" value="P:glycine betaine biosynthetic process from choline"/>
    <property type="evidence" value="ECO:0007669"/>
    <property type="project" value="UniProtKB-UniRule"/>
</dbReference>
<dbReference type="CDD" id="cd07090">
    <property type="entry name" value="ALDH_F9_TMBADH"/>
    <property type="match status" value="1"/>
</dbReference>
<dbReference type="FunFam" id="3.40.605.10:FF:000026">
    <property type="entry name" value="Aldehyde dehydrogenase, putative"/>
    <property type="match status" value="1"/>
</dbReference>
<dbReference type="FunFam" id="3.40.309.10:FF:000014">
    <property type="entry name" value="NAD/NADP-dependent betaine aldehyde dehydrogenase"/>
    <property type="match status" value="1"/>
</dbReference>
<dbReference type="FunFam" id="3.40.605.10:FF:000007">
    <property type="entry name" value="NAD/NADP-dependent betaine aldehyde dehydrogenase"/>
    <property type="match status" value="1"/>
</dbReference>
<dbReference type="Gene3D" id="3.40.605.10">
    <property type="entry name" value="Aldehyde Dehydrogenase, Chain A, domain 1"/>
    <property type="match status" value="1"/>
</dbReference>
<dbReference type="Gene3D" id="3.40.309.10">
    <property type="entry name" value="Aldehyde Dehydrogenase, Chain A, domain 2"/>
    <property type="match status" value="1"/>
</dbReference>
<dbReference type="HAMAP" id="MF_00804">
    <property type="entry name" value="BADH"/>
    <property type="match status" value="1"/>
</dbReference>
<dbReference type="InterPro" id="IPR016161">
    <property type="entry name" value="Ald_DH/histidinol_DH"/>
</dbReference>
<dbReference type="InterPro" id="IPR016163">
    <property type="entry name" value="Ald_DH_C"/>
</dbReference>
<dbReference type="InterPro" id="IPR016160">
    <property type="entry name" value="Ald_DH_CS_CYS"/>
</dbReference>
<dbReference type="InterPro" id="IPR029510">
    <property type="entry name" value="Ald_DH_CS_GLU"/>
</dbReference>
<dbReference type="InterPro" id="IPR016162">
    <property type="entry name" value="Ald_DH_N"/>
</dbReference>
<dbReference type="InterPro" id="IPR015590">
    <property type="entry name" value="Aldehyde_DH_dom"/>
</dbReference>
<dbReference type="InterPro" id="IPR011264">
    <property type="entry name" value="BADH"/>
</dbReference>
<dbReference type="NCBIfam" id="TIGR01804">
    <property type="entry name" value="BADH"/>
    <property type="match status" value="1"/>
</dbReference>
<dbReference type="NCBIfam" id="NF009725">
    <property type="entry name" value="PRK13252.1"/>
    <property type="match status" value="1"/>
</dbReference>
<dbReference type="PANTHER" id="PTHR11699">
    <property type="entry name" value="ALDEHYDE DEHYDROGENASE-RELATED"/>
    <property type="match status" value="1"/>
</dbReference>
<dbReference type="Pfam" id="PF00171">
    <property type="entry name" value="Aldedh"/>
    <property type="match status" value="1"/>
</dbReference>
<dbReference type="SUPFAM" id="SSF53720">
    <property type="entry name" value="ALDH-like"/>
    <property type="match status" value="1"/>
</dbReference>
<dbReference type="PROSITE" id="PS00070">
    <property type="entry name" value="ALDEHYDE_DEHYDR_CYS"/>
    <property type="match status" value="1"/>
</dbReference>
<dbReference type="PROSITE" id="PS00687">
    <property type="entry name" value="ALDEHYDE_DEHYDR_GLU"/>
    <property type="match status" value="1"/>
</dbReference>
<gene>
    <name evidence="1" type="primary">betB</name>
    <name type="ordered locus">Oant_2710</name>
</gene>
<organism>
    <name type="scientific">Brucella anthropi (strain ATCC 49188 / DSM 6882 / CCUG 24695 / JCM 21032 / LMG 3331 / NBRC 15819 / NCTC 12168 / Alc 37)</name>
    <name type="common">Ochrobactrum anthropi</name>
    <dbReference type="NCBI Taxonomy" id="439375"/>
    <lineage>
        <taxon>Bacteria</taxon>
        <taxon>Pseudomonadati</taxon>
        <taxon>Pseudomonadota</taxon>
        <taxon>Alphaproteobacteria</taxon>
        <taxon>Hyphomicrobiales</taxon>
        <taxon>Brucellaceae</taxon>
        <taxon>Brucella/Ochrobactrum group</taxon>
        <taxon>Brucella</taxon>
    </lineage>
</organism>
<reference key="1">
    <citation type="journal article" date="2011" name="J. Bacteriol.">
        <title>Genome of Ochrobactrum anthropi ATCC 49188 T, a versatile opportunistic pathogen and symbiont of several eukaryotic hosts.</title>
        <authorList>
            <person name="Chain P.S."/>
            <person name="Lang D.M."/>
            <person name="Comerci D.J."/>
            <person name="Malfatti S.A."/>
            <person name="Vergez L.M."/>
            <person name="Shin M."/>
            <person name="Ugalde R.A."/>
            <person name="Garcia E."/>
            <person name="Tolmasky M.E."/>
        </authorList>
    </citation>
    <scope>NUCLEOTIDE SEQUENCE [LARGE SCALE GENOMIC DNA]</scope>
    <source>
        <strain>ATCC 49188 / DSM 6882 / CCUG 24695 / JCM 21032 / LMG 3331 / NBRC 15819 / NCTC 12168 / Alc 37</strain>
    </source>
</reference>
<feature type="chain" id="PRO_1000047044" description="Betaine aldehyde dehydrogenase">
    <location>
        <begin position="1"/>
        <end position="487"/>
    </location>
</feature>
<feature type="active site" description="Charge relay system" evidence="1">
    <location>
        <position position="161"/>
    </location>
</feature>
<feature type="active site" description="Proton acceptor" evidence="1">
    <location>
        <position position="249"/>
    </location>
</feature>
<feature type="active site" description="Nucleophile" evidence="1">
    <location>
        <position position="283"/>
    </location>
</feature>
<feature type="active site" description="Charge relay system" evidence="1">
    <location>
        <position position="461"/>
    </location>
</feature>
<feature type="binding site" evidence="1">
    <location>
        <position position="27"/>
    </location>
    <ligand>
        <name>K(+)</name>
        <dbReference type="ChEBI" id="CHEBI:29103"/>
        <label>1</label>
    </ligand>
</feature>
<feature type="binding site" evidence="1">
    <location>
        <position position="93"/>
    </location>
    <ligand>
        <name>K(+)</name>
        <dbReference type="ChEBI" id="CHEBI:29103"/>
        <label>1</label>
    </ligand>
</feature>
<feature type="binding site" evidence="1">
    <location>
        <begin position="149"/>
        <end position="151"/>
    </location>
    <ligand>
        <name>NAD(+)</name>
        <dbReference type="ChEBI" id="CHEBI:57540"/>
    </ligand>
</feature>
<feature type="binding site" evidence="1">
    <location>
        <begin position="175"/>
        <end position="178"/>
    </location>
    <ligand>
        <name>NAD(+)</name>
        <dbReference type="ChEBI" id="CHEBI:57540"/>
    </ligand>
</feature>
<feature type="binding site" evidence="1">
    <location>
        <begin position="228"/>
        <end position="231"/>
    </location>
    <ligand>
        <name>NAD(+)</name>
        <dbReference type="ChEBI" id="CHEBI:57540"/>
    </ligand>
</feature>
<feature type="binding site" evidence="1">
    <location>
        <position position="243"/>
    </location>
    <ligand>
        <name>K(+)</name>
        <dbReference type="ChEBI" id="CHEBI:29103"/>
        <label>2</label>
    </ligand>
</feature>
<feature type="binding site" evidence="1">
    <location>
        <position position="251"/>
    </location>
    <ligand>
        <name>NAD(+)</name>
        <dbReference type="ChEBI" id="CHEBI:57540"/>
    </ligand>
</feature>
<feature type="binding site" description="covalent" evidence="1">
    <location>
        <position position="283"/>
    </location>
    <ligand>
        <name>NAD(+)</name>
        <dbReference type="ChEBI" id="CHEBI:57540"/>
    </ligand>
</feature>
<feature type="binding site" evidence="1">
    <location>
        <position position="384"/>
    </location>
    <ligand>
        <name>NAD(+)</name>
        <dbReference type="ChEBI" id="CHEBI:57540"/>
    </ligand>
</feature>
<feature type="binding site" evidence="1">
    <location>
        <position position="454"/>
    </location>
    <ligand>
        <name>K(+)</name>
        <dbReference type="ChEBI" id="CHEBI:29103"/>
        <label>2</label>
    </ligand>
</feature>
<feature type="binding site" evidence="1">
    <location>
        <position position="457"/>
    </location>
    <ligand>
        <name>K(+)</name>
        <dbReference type="ChEBI" id="CHEBI:29103"/>
        <label>2</label>
    </ligand>
</feature>
<feature type="modified residue" description="Cysteine sulfenic acid (-SOH)" evidence="1">
    <location>
        <position position="283"/>
    </location>
</feature>
<protein>
    <recommendedName>
        <fullName evidence="1">Betaine aldehyde dehydrogenase</fullName>
        <shortName evidence="1">BADH</shortName>
        <ecNumber evidence="1">1.2.1.8</ecNumber>
    </recommendedName>
</protein>
<accession>A6X2G8</accession>
<proteinExistence type="inferred from homology"/>
<keyword id="KW-0479">Metal-binding</keyword>
<keyword id="KW-0520">NAD</keyword>
<keyword id="KW-0521">NADP</keyword>
<keyword id="KW-0558">Oxidation</keyword>
<keyword id="KW-0560">Oxidoreductase</keyword>
<keyword id="KW-0630">Potassium</keyword>
<keyword id="KW-1185">Reference proteome</keyword>